<name>WHIA_CLOBL</name>
<gene>
    <name evidence="1" type="primary">whiA</name>
    <name type="ordered locus">CLI_3559</name>
</gene>
<evidence type="ECO:0000255" key="1">
    <source>
        <dbReference type="HAMAP-Rule" id="MF_01420"/>
    </source>
</evidence>
<proteinExistence type="inferred from homology"/>
<feature type="chain" id="PRO_0000376461" description="Probable cell division protein WhiA">
    <location>
        <begin position="1"/>
        <end position="315"/>
    </location>
</feature>
<feature type="DNA-binding region" description="H-T-H motif" evidence="1">
    <location>
        <begin position="280"/>
        <end position="313"/>
    </location>
</feature>
<sequence>MSFSLKVKNEVCKHVEVNKQEAIAELSAIMKVSGTLLFTNKQFNFKITTENAAIARLVFKILKEHFGIHTEIMIKKNNSLKKNNIYIILISEEEGVKSLLKEVGIIKETINVFSLDYNIPKSIIECDECRRAYIRGAFLGGGSISNPEKTYHLEFVTHNEEYAKDLSNLINSYNLNSKVIKRKNSYIIYLKEGEQIVDLLNIIGAHASLLELENVRIMKEMRNNVNRLVNCETANLSKTVNAAVRQVESIKFIEREIGLGRLPKNLRDVAELRIKYPDESLRELGKMLNPPVGKSGVNHRLRRIEKIADELKQGI</sequence>
<accession>A7GIX1</accession>
<keyword id="KW-0131">Cell cycle</keyword>
<keyword id="KW-0132">Cell division</keyword>
<keyword id="KW-0238">DNA-binding</keyword>
<protein>
    <recommendedName>
        <fullName evidence="1">Probable cell division protein WhiA</fullName>
    </recommendedName>
</protein>
<reference key="1">
    <citation type="submission" date="2007-06" db="EMBL/GenBank/DDBJ databases">
        <authorList>
            <person name="Brinkac L.M."/>
            <person name="Daugherty S."/>
            <person name="Dodson R.J."/>
            <person name="Madupu R."/>
            <person name="Brown J.L."/>
            <person name="Bruce D."/>
            <person name="Detter C."/>
            <person name="Munk C."/>
            <person name="Smith L.A."/>
            <person name="Smith T.J."/>
            <person name="White O."/>
            <person name="Brettin T.S."/>
        </authorList>
    </citation>
    <scope>NUCLEOTIDE SEQUENCE [LARGE SCALE GENOMIC DNA]</scope>
    <source>
        <strain>Langeland / NCTC 10281 / Type F</strain>
    </source>
</reference>
<organism>
    <name type="scientific">Clostridium botulinum (strain Langeland / NCTC 10281 / Type F)</name>
    <dbReference type="NCBI Taxonomy" id="441772"/>
    <lineage>
        <taxon>Bacteria</taxon>
        <taxon>Bacillati</taxon>
        <taxon>Bacillota</taxon>
        <taxon>Clostridia</taxon>
        <taxon>Eubacteriales</taxon>
        <taxon>Clostridiaceae</taxon>
        <taxon>Clostridium</taxon>
    </lineage>
</organism>
<dbReference type="EMBL" id="CP000728">
    <property type="protein sequence ID" value="ABS40094.1"/>
    <property type="molecule type" value="Genomic_DNA"/>
</dbReference>
<dbReference type="RefSeq" id="WP_003357358.1">
    <property type="nucleotide sequence ID" value="NC_009699.1"/>
</dbReference>
<dbReference type="SMR" id="A7GIX1"/>
<dbReference type="GeneID" id="5187629"/>
<dbReference type="KEGG" id="cbf:CLI_3559"/>
<dbReference type="HOGENOM" id="CLU_053282_0_0_9"/>
<dbReference type="Proteomes" id="UP000002410">
    <property type="component" value="Chromosome"/>
</dbReference>
<dbReference type="GO" id="GO:0003677">
    <property type="term" value="F:DNA binding"/>
    <property type="evidence" value="ECO:0007669"/>
    <property type="project" value="UniProtKB-UniRule"/>
</dbReference>
<dbReference type="GO" id="GO:0004519">
    <property type="term" value="F:endonuclease activity"/>
    <property type="evidence" value="ECO:0007669"/>
    <property type="project" value="InterPro"/>
</dbReference>
<dbReference type="GO" id="GO:0051301">
    <property type="term" value="P:cell division"/>
    <property type="evidence" value="ECO:0007669"/>
    <property type="project" value="UniProtKB-UniRule"/>
</dbReference>
<dbReference type="GO" id="GO:0043937">
    <property type="term" value="P:regulation of sporulation"/>
    <property type="evidence" value="ECO:0007669"/>
    <property type="project" value="InterPro"/>
</dbReference>
<dbReference type="Gene3D" id="3.10.28.10">
    <property type="entry name" value="Homing endonucleases"/>
    <property type="match status" value="1"/>
</dbReference>
<dbReference type="HAMAP" id="MF_01420">
    <property type="entry name" value="HTH_type_WhiA"/>
    <property type="match status" value="1"/>
</dbReference>
<dbReference type="InterPro" id="IPR027434">
    <property type="entry name" value="Homing_endonucl"/>
</dbReference>
<dbReference type="InterPro" id="IPR004042">
    <property type="entry name" value="Intein_endonuc_central"/>
</dbReference>
<dbReference type="InterPro" id="IPR018478">
    <property type="entry name" value="Sporu_reg_WhiA_N_dom"/>
</dbReference>
<dbReference type="InterPro" id="IPR003802">
    <property type="entry name" value="Sporulation_regulator_WhiA"/>
</dbReference>
<dbReference type="InterPro" id="IPR023054">
    <property type="entry name" value="Sporulation_regulator_WhiA_C"/>
</dbReference>
<dbReference type="InterPro" id="IPR039518">
    <property type="entry name" value="WhiA_LAGLIDADG_dom"/>
</dbReference>
<dbReference type="NCBIfam" id="TIGR00647">
    <property type="entry name" value="DNA_bind_WhiA"/>
    <property type="match status" value="1"/>
</dbReference>
<dbReference type="PANTHER" id="PTHR37307">
    <property type="entry name" value="CELL DIVISION PROTEIN WHIA-RELATED"/>
    <property type="match status" value="1"/>
</dbReference>
<dbReference type="PANTHER" id="PTHR37307:SF1">
    <property type="entry name" value="CELL DIVISION PROTEIN WHIA-RELATED"/>
    <property type="match status" value="1"/>
</dbReference>
<dbReference type="Pfam" id="PF02650">
    <property type="entry name" value="HTH_WhiA"/>
    <property type="match status" value="1"/>
</dbReference>
<dbReference type="Pfam" id="PF14527">
    <property type="entry name" value="LAGLIDADG_WhiA"/>
    <property type="match status" value="1"/>
</dbReference>
<dbReference type="Pfam" id="PF10298">
    <property type="entry name" value="WhiA_N"/>
    <property type="match status" value="1"/>
</dbReference>
<dbReference type="SUPFAM" id="SSF55608">
    <property type="entry name" value="Homing endonucleases"/>
    <property type="match status" value="1"/>
</dbReference>
<dbReference type="PROSITE" id="PS50819">
    <property type="entry name" value="INTEIN_ENDONUCLEASE"/>
    <property type="match status" value="1"/>
</dbReference>
<comment type="function">
    <text evidence="1">Involved in cell division and chromosome segregation.</text>
</comment>
<comment type="similarity">
    <text evidence="1">Belongs to the WhiA family.</text>
</comment>